<protein>
    <recommendedName>
        <fullName>Trehalose 6-phosphate phosphorylase</fullName>
        <shortName>TrePP</shortName>
        <ecNumber>2.4.1.216</ecNumber>
    </recommendedName>
</protein>
<comment type="function">
    <text>Catalyzes the conversion of trehalose 6-phosphate into glucose 1-phosphate and glucose 6-phosphate.</text>
</comment>
<comment type="catalytic activity">
    <reaction>
        <text>alpha,alpha-trehalose 6-phosphate + phosphate = beta-D-glucose 1-phosphate + D-glucose 6-phosphate</text>
        <dbReference type="Rhea" id="RHEA:20864"/>
        <dbReference type="ChEBI" id="CHEBI:43474"/>
        <dbReference type="ChEBI" id="CHEBI:57684"/>
        <dbReference type="ChEBI" id="CHEBI:58429"/>
        <dbReference type="ChEBI" id="CHEBI:61548"/>
        <dbReference type="EC" id="2.4.1.216"/>
    </reaction>
</comment>
<comment type="biophysicochemical properties">
    <phDependence>
        <text>Optimum pH is 6.3.</text>
    </phDependence>
    <temperatureDependence>
        <text>Optimum temperature is 35 degrees Celsius.</text>
    </temperatureDependence>
</comment>
<comment type="subunit">
    <text>Monomer.</text>
</comment>
<comment type="similarity">
    <text evidence="3">Belongs to the glycosyl hydrolase 65 family.</text>
</comment>
<gene>
    <name type="primary">trePP</name>
    <name type="ordered locus">LL0428</name>
    <name type="ORF">L39593</name>
</gene>
<evidence type="ECO:0000250" key="1">
    <source>
        <dbReference type="UniProtKB" id="D6XZ22"/>
    </source>
</evidence>
<evidence type="ECO:0000269" key="2">
    <source>
    </source>
</evidence>
<evidence type="ECO:0000305" key="3"/>
<name>TREPP_LACLA</name>
<organism>
    <name type="scientific">Lactococcus lactis subsp. lactis (strain IL1403)</name>
    <name type="common">Streptococcus lactis</name>
    <dbReference type="NCBI Taxonomy" id="272623"/>
    <lineage>
        <taxon>Bacteria</taxon>
        <taxon>Bacillati</taxon>
        <taxon>Bacillota</taxon>
        <taxon>Bacilli</taxon>
        <taxon>Lactobacillales</taxon>
        <taxon>Streptococcaceae</taxon>
        <taxon>Lactococcus</taxon>
    </lineage>
</organism>
<accession>Q9CID5</accession>
<accession>Q9ZAG0</accession>
<sequence>MTEKDWIIQYDKKEVGKRSYGQESLMSLGNGYLGLRGAPLWSTCSDNHYPGLYVAGVFNRTSTEVAGHDVINEDMVNWPNPQLIKVYIDGELVDFEASVEKQATIDFKNALQIERYQVKLAKGNLTLVTTKFVDPINFHDFGFVGEIIADFSCKLRIETFTDGSVLNQNVERYRAFDSKEFEVTKISKGLLVAKTRTSEIELAIASKSFLNGLAFPKIDSENDEILAEAIEIDLQKNQEVQFDKTIVIASSYESKNPVEFVLTELSATSVSKIQENNTNYWEKVWSDADIVIESDHEDLQRMVRMNIFHIRQAAQHGANQFLDASVGSRGLTGEGYRGHIFWDEIFVLPYYAANEPETARDLLLYRINRLTAAQENAKVDGEKGAMFPWQSGLIGDEQSQFVHLNTVNNEWEPDNSRRQRHVSLAIVYNLWIYSQLTEDESILTDGGLDLIIETTKFWLNKAELGDDGRYHIDGVMGPDEYHEAYPGQEGGICDNAYTNLMLTWQLNWLTELSEKGFEIPKELLEKAQKVRKKLYLDIDENGVIAQYAKYFELKEVDFAAYEAKYGDIHRIDRLMKAEGISPDEYQVAKQADTLMLIYNLGQEHVTKLVKQLAYELPENWLKVNRDYYLARTVHGSTTSRPVFAGIDVKLGDFDEALDFLITAIGSDYYDIQGGTTAEGVHIGVMGETLEVIQNEFAGLSLREGQFAIAPYLPKSWTKLKFNQIFRGTKVEILIENGQLLLTASADLLTKVYDDEVQLKAGVQTKFDLK</sequence>
<proteinExistence type="evidence at protein level"/>
<feature type="initiator methionine" description="Removed" evidence="2">
    <location>
        <position position="1"/>
    </location>
</feature>
<feature type="chain" id="PRO_0000108014" description="Trehalose 6-phosphate phosphorylase">
    <location>
        <begin position="2"/>
        <end position="769"/>
    </location>
</feature>
<feature type="active site" description="Proton donor" evidence="1">
    <location>
        <position position="480"/>
    </location>
</feature>
<feature type="binding site" evidence="1">
    <location>
        <begin position="342"/>
        <end position="343"/>
    </location>
    <ligand>
        <name>substrate</name>
    </ligand>
</feature>
<feature type="binding site" evidence="1">
    <location>
        <begin position="589"/>
        <end position="590"/>
    </location>
    <ligand>
        <name>substrate</name>
    </ligand>
</feature>
<feature type="sequence variant" description="In strain: ATCC 19435.">
    <original>E</original>
    <variation>D</variation>
    <location>
        <position position="703"/>
    </location>
</feature>
<reference key="1">
    <citation type="journal article" date="2001" name="J. Biol. Chem.">
        <title>Trehalose-6-phosphate phosphorylase is part of a novel metabolic pathway for trehalose utilization in Lactococcus lactis.</title>
        <authorList>
            <person name="Andersson U."/>
            <person name="Levander F."/>
            <person name="Raedstroem P."/>
        </authorList>
    </citation>
    <scope>NUCLEOTIDE SEQUENCE [GENOMIC DNA]</scope>
    <scope>PROTEIN SEQUENCE OF 2-9</scope>
    <scope>CHARACTERIZATION</scope>
    <source>
        <strain>ATCC 19435 / DSM 20481 / NCDO 604 / NCIB 6681 / NCTC 6681</strain>
    </source>
</reference>
<reference key="2">
    <citation type="journal article" date="2001" name="Genome Res.">
        <title>The complete genome sequence of the lactic acid bacterium Lactococcus lactis ssp. lactis IL1403.</title>
        <authorList>
            <person name="Bolotin A."/>
            <person name="Wincker P."/>
            <person name="Mauger S."/>
            <person name="Jaillon O."/>
            <person name="Malarme K."/>
            <person name="Weissenbach J."/>
            <person name="Ehrlich S.D."/>
            <person name="Sorokin A."/>
        </authorList>
    </citation>
    <scope>NUCLEOTIDE SEQUENCE [LARGE SCALE GENOMIC DNA]</scope>
    <source>
        <strain>IL1403</strain>
    </source>
</reference>
<dbReference type="EC" id="2.4.1.216"/>
<dbReference type="EMBL" id="Y18267">
    <property type="protein sequence ID" value="CAA77100.1"/>
    <property type="molecule type" value="Genomic_DNA"/>
</dbReference>
<dbReference type="EMBL" id="AE005176">
    <property type="protein sequence ID" value="AAK04526.1"/>
    <property type="molecule type" value="Genomic_DNA"/>
</dbReference>
<dbReference type="PIR" id="D86678">
    <property type="entry name" value="D86678"/>
</dbReference>
<dbReference type="RefSeq" id="NP_266584.1">
    <property type="nucleotide sequence ID" value="NC_002662.1"/>
</dbReference>
<dbReference type="RefSeq" id="WP_010905330.1">
    <property type="nucleotide sequence ID" value="NC_002662.1"/>
</dbReference>
<dbReference type="SMR" id="Q9CID5"/>
<dbReference type="CAZy" id="GH65">
    <property type="family name" value="Glycoside Hydrolase Family 65"/>
</dbReference>
<dbReference type="PaxDb" id="272623-L39593"/>
<dbReference type="EnsemblBacteria" id="AAK04526">
    <property type="protein sequence ID" value="AAK04526"/>
    <property type="gene ID" value="L39593"/>
</dbReference>
<dbReference type="KEGG" id="lla:L39593"/>
<dbReference type="PATRIC" id="fig|272623.7.peg.466"/>
<dbReference type="eggNOG" id="COG1554">
    <property type="taxonomic scope" value="Bacteria"/>
</dbReference>
<dbReference type="HOGENOM" id="CLU_006285_1_1_9"/>
<dbReference type="OrthoDB" id="9758855at2"/>
<dbReference type="BioCyc" id="MetaCyc:MONOMER-5861"/>
<dbReference type="BRENDA" id="2.4.1.216">
    <property type="organism ID" value="2903"/>
</dbReference>
<dbReference type="SABIO-RK" id="Q9CID5"/>
<dbReference type="Proteomes" id="UP000002196">
    <property type="component" value="Chromosome"/>
</dbReference>
<dbReference type="GO" id="GO:0030246">
    <property type="term" value="F:carbohydrate binding"/>
    <property type="evidence" value="ECO:0007669"/>
    <property type="project" value="InterPro"/>
</dbReference>
<dbReference type="GO" id="GO:0004553">
    <property type="term" value="F:hydrolase activity, hydrolyzing O-glycosyl compounds"/>
    <property type="evidence" value="ECO:0007669"/>
    <property type="project" value="TreeGrafter"/>
</dbReference>
<dbReference type="GO" id="GO:0050503">
    <property type="term" value="F:trehalose 6-phosphate phosphorylase activity"/>
    <property type="evidence" value="ECO:0007669"/>
    <property type="project" value="UniProtKB-EC"/>
</dbReference>
<dbReference type="GO" id="GO:0005975">
    <property type="term" value="P:carbohydrate metabolic process"/>
    <property type="evidence" value="ECO:0007669"/>
    <property type="project" value="InterPro"/>
</dbReference>
<dbReference type="Gene3D" id="1.50.10.10">
    <property type="match status" value="1"/>
</dbReference>
<dbReference type="Gene3D" id="2.70.98.40">
    <property type="entry name" value="Glycoside hydrolase, family 65, N-terminal domain"/>
    <property type="match status" value="1"/>
</dbReference>
<dbReference type="Gene3D" id="2.60.420.10">
    <property type="entry name" value="Maltose phosphorylase, domain 3"/>
    <property type="match status" value="1"/>
</dbReference>
<dbReference type="InterPro" id="IPR008928">
    <property type="entry name" value="6-hairpin_glycosidase_sf"/>
</dbReference>
<dbReference type="InterPro" id="IPR012341">
    <property type="entry name" value="6hp_glycosidase-like_sf"/>
</dbReference>
<dbReference type="InterPro" id="IPR011013">
    <property type="entry name" value="Gal_mutarotase_sf_dom"/>
</dbReference>
<dbReference type="InterPro" id="IPR005194">
    <property type="entry name" value="Glyco_hydro_65_C"/>
</dbReference>
<dbReference type="InterPro" id="IPR005195">
    <property type="entry name" value="Glyco_hydro_65_M"/>
</dbReference>
<dbReference type="InterPro" id="IPR005196">
    <property type="entry name" value="Glyco_hydro_65_N"/>
</dbReference>
<dbReference type="InterPro" id="IPR037018">
    <property type="entry name" value="Glyco_hydro_65_N_sf"/>
</dbReference>
<dbReference type="InterPro" id="IPR017045">
    <property type="entry name" value="Malt_Pase/Glycosyl_Hdrlase"/>
</dbReference>
<dbReference type="PANTHER" id="PTHR11051">
    <property type="entry name" value="GLYCOSYL HYDROLASE-RELATED"/>
    <property type="match status" value="1"/>
</dbReference>
<dbReference type="PANTHER" id="PTHR11051:SF8">
    <property type="entry name" value="PROTEIN-GLUCOSYLGALACTOSYLHYDROXYLYSINE GLUCOSIDASE"/>
    <property type="match status" value="1"/>
</dbReference>
<dbReference type="Pfam" id="PF03633">
    <property type="entry name" value="Glyco_hydro_65C"/>
    <property type="match status" value="1"/>
</dbReference>
<dbReference type="Pfam" id="PF03632">
    <property type="entry name" value="Glyco_hydro_65m"/>
    <property type="match status" value="1"/>
</dbReference>
<dbReference type="Pfam" id="PF03636">
    <property type="entry name" value="Glyco_hydro_65N"/>
    <property type="match status" value="1"/>
</dbReference>
<dbReference type="PIRSF" id="PIRSF036289">
    <property type="entry name" value="Glycosyl_hydrolase_malt_phosph"/>
    <property type="match status" value="1"/>
</dbReference>
<dbReference type="SUPFAM" id="SSF74650">
    <property type="entry name" value="Galactose mutarotase-like"/>
    <property type="match status" value="1"/>
</dbReference>
<dbReference type="SUPFAM" id="SSF48208">
    <property type="entry name" value="Six-hairpin glycosidases"/>
    <property type="match status" value="1"/>
</dbReference>
<keyword id="KW-0903">Direct protein sequencing</keyword>
<keyword id="KW-0328">Glycosyltransferase</keyword>
<keyword id="KW-1185">Reference proteome</keyword>
<keyword id="KW-0808">Transferase</keyword>